<dbReference type="EMBL" id="X51350">
    <property type="protein sequence ID" value="CAA35742.1"/>
    <property type="molecule type" value="Genomic_DNA"/>
</dbReference>
<dbReference type="ChiTaRS" id="Rh3">
    <property type="organism name" value="fly"/>
</dbReference>
<dbReference type="GO" id="GO:0016020">
    <property type="term" value="C:membrane"/>
    <property type="evidence" value="ECO:0007669"/>
    <property type="project" value="UniProtKB-SubCell"/>
</dbReference>
<dbReference type="GO" id="GO:0004930">
    <property type="term" value="F:G protein-coupled receptor activity"/>
    <property type="evidence" value="ECO:0007669"/>
    <property type="project" value="UniProtKB-KW"/>
</dbReference>
<dbReference type="GO" id="GO:0009881">
    <property type="term" value="F:photoreceptor activity"/>
    <property type="evidence" value="ECO:0007669"/>
    <property type="project" value="UniProtKB-KW"/>
</dbReference>
<dbReference type="GO" id="GO:0008218">
    <property type="term" value="P:bioluminescence"/>
    <property type="evidence" value="ECO:0007669"/>
    <property type="project" value="UniProtKB-KW"/>
</dbReference>
<dbReference type="GO" id="GO:0007602">
    <property type="term" value="P:phototransduction"/>
    <property type="evidence" value="ECO:0007669"/>
    <property type="project" value="UniProtKB-KW"/>
</dbReference>
<dbReference type="GO" id="GO:0007601">
    <property type="term" value="P:visual perception"/>
    <property type="evidence" value="ECO:0007669"/>
    <property type="project" value="UniProtKB-KW"/>
</dbReference>
<protein>
    <recommendedName>
        <fullName>Opsin Rh3</fullName>
    </recommendedName>
    <alternativeName>
        <fullName>Inner R7 photoreceptor cells opsin</fullName>
    </alternativeName>
</protein>
<proteinExistence type="inferred from homology"/>
<organism>
    <name type="scientific">Drosophila virilis</name>
    <name type="common">Fruit fly</name>
    <dbReference type="NCBI Taxonomy" id="7244"/>
    <lineage>
        <taxon>Eukaryota</taxon>
        <taxon>Metazoa</taxon>
        <taxon>Ecdysozoa</taxon>
        <taxon>Arthropoda</taxon>
        <taxon>Hexapoda</taxon>
        <taxon>Insecta</taxon>
        <taxon>Pterygota</taxon>
        <taxon>Neoptera</taxon>
        <taxon>Endopterygota</taxon>
        <taxon>Diptera</taxon>
        <taxon>Brachycera</taxon>
        <taxon>Muscomorpha</taxon>
        <taxon>Ephydroidea</taxon>
        <taxon>Drosophilidae</taxon>
        <taxon>Drosophila</taxon>
    </lineage>
</organism>
<accession>P17645</accession>
<evidence type="ECO:0000305" key="1"/>
<reference key="1">
    <citation type="journal article" date="1990" name="Genes Dev.">
        <title>Analysis of cis-acting requirements of the Rh3 and Rh4 genes reveals a bipartite organization to rhodopsin promoters in Drosophila melanogaster.</title>
        <authorList>
            <person name="Fortini M.E."/>
            <person name="Rubin G.M."/>
        </authorList>
    </citation>
    <scope>NUCLEOTIDE SEQUENCE [GENOMIC DNA]</scope>
</reference>
<name>OPS3_DROVI</name>
<comment type="function">
    <text>Visual pigments are the light-absorbing molecules that mediate vision. They consist of an apoprotein, opsin, covalently linked to cis-retinal.</text>
</comment>
<comment type="subcellular location">
    <subcellularLocation>
        <location>Membrane</location>
        <topology>Multi-pass membrane protein</topology>
    </subcellularLocation>
</comment>
<comment type="miscellaneous">
    <text>Each Drosophila eye is composed of 800 facets or ommatidia. Each ommatidium contains 8 photoreceptor cells (R1-R8), the R1 to R6 cells are outer cells, while R7 and R8 are inner cells.</text>
</comment>
<comment type="miscellaneous">
    <text>Opsin Rh3 is sensitive to UV light.</text>
</comment>
<comment type="similarity">
    <text evidence="1">Belongs to the G-protein coupled receptor 1 family. Opsin subfamily.</text>
</comment>
<feature type="chain" id="PRO_0000197629" description="Opsin Rh3">
    <location>
        <begin position="1"/>
        <end position="12" status="greater than"/>
    </location>
</feature>
<feature type="non-terminal residue">
    <location>
        <position position="12"/>
    </location>
</feature>
<keyword id="KW-0157">Chromophore</keyword>
<keyword id="KW-0297">G-protein coupled receptor</keyword>
<keyword id="KW-0455">Luminescence</keyword>
<keyword id="KW-0472">Membrane</keyword>
<keyword id="KW-0599">Photoprotein</keyword>
<keyword id="KW-0600">Photoreceptor protein</keyword>
<keyword id="KW-0675">Receptor</keyword>
<keyword id="KW-0681">Retinal protein</keyword>
<keyword id="KW-0716">Sensory transduction</keyword>
<keyword id="KW-0807">Transducer</keyword>
<keyword id="KW-0812">Transmembrane</keyword>
<keyword id="KW-0844">Vision</keyword>
<sequence length="12" mass="1253">MDFNISGIGNVS</sequence>
<gene>
    <name type="primary">Rh3</name>
</gene>